<proteinExistence type="inferred from homology"/>
<geneLocation type="chloroplast"/>
<evidence type="ECO:0000255" key="1">
    <source>
        <dbReference type="HAMAP-Rule" id="MF_00522"/>
    </source>
</evidence>
<reference key="1">
    <citation type="submission" date="2007-03" db="EMBL/GenBank/DDBJ databases">
        <title>Sequencing analysis of Nasturtium officinale chloroplast DNA.</title>
        <authorList>
            <person name="Hosouchi T."/>
            <person name="Tsuruoka H."/>
            <person name="Kotani H."/>
        </authorList>
    </citation>
    <scope>NUCLEOTIDE SEQUENCE [LARGE SCALE GENOMIC DNA]</scope>
</reference>
<protein>
    <recommendedName>
        <fullName evidence="1">Photosystem I reaction center subunit IX</fullName>
    </recommendedName>
    <alternativeName>
        <fullName evidence="1">PSI-J</fullName>
    </alternativeName>
</protein>
<keyword id="KW-0150">Chloroplast</keyword>
<keyword id="KW-0472">Membrane</keyword>
<keyword id="KW-0602">Photosynthesis</keyword>
<keyword id="KW-0603">Photosystem I</keyword>
<keyword id="KW-0934">Plastid</keyword>
<keyword id="KW-0793">Thylakoid</keyword>
<keyword id="KW-0812">Transmembrane</keyword>
<keyword id="KW-1133">Transmembrane helix</keyword>
<comment type="function">
    <text evidence="1">May help in the organization of the PsaE and PsaF subunits.</text>
</comment>
<comment type="subcellular location">
    <subcellularLocation>
        <location evidence="1">Plastid</location>
        <location evidence="1">Chloroplast thylakoid membrane</location>
        <topology evidence="1">Single-pass membrane protein</topology>
    </subcellularLocation>
</comment>
<comment type="similarity">
    <text evidence="1">Belongs to the PsaJ family.</text>
</comment>
<accession>A4QLV3</accession>
<gene>
    <name evidence="1" type="primary">psaJ</name>
</gene>
<organism>
    <name type="scientific">Nasturtium officinale</name>
    <name type="common">Watercress</name>
    <name type="synonym">Rorippa nasturtium-aquaticum</name>
    <dbReference type="NCBI Taxonomy" id="65948"/>
    <lineage>
        <taxon>Eukaryota</taxon>
        <taxon>Viridiplantae</taxon>
        <taxon>Streptophyta</taxon>
        <taxon>Embryophyta</taxon>
        <taxon>Tracheophyta</taxon>
        <taxon>Spermatophyta</taxon>
        <taxon>Magnoliopsida</taxon>
        <taxon>eudicotyledons</taxon>
        <taxon>Gunneridae</taxon>
        <taxon>Pentapetalae</taxon>
        <taxon>rosids</taxon>
        <taxon>malvids</taxon>
        <taxon>Brassicales</taxon>
        <taxon>Brassicaceae</taxon>
        <taxon>Cardamineae</taxon>
        <taxon>Nasturtium</taxon>
    </lineage>
</organism>
<name>PSAJ_NASOF</name>
<feature type="chain" id="PRO_0000354160" description="Photosystem I reaction center subunit IX">
    <location>
        <begin position="1"/>
        <end position="44"/>
    </location>
</feature>
<feature type="transmembrane region" description="Helical" evidence="1">
    <location>
        <begin position="7"/>
        <end position="27"/>
    </location>
</feature>
<dbReference type="EMBL" id="AP009376">
    <property type="protein sequence ID" value="BAF50658.1"/>
    <property type="molecule type" value="Genomic_DNA"/>
</dbReference>
<dbReference type="RefSeq" id="YP_001123834.1">
    <property type="nucleotide sequence ID" value="NC_009275.1"/>
</dbReference>
<dbReference type="SMR" id="A4QLV3"/>
<dbReference type="GeneID" id="4962199"/>
<dbReference type="GO" id="GO:0009535">
    <property type="term" value="C:chloroplast thylakoid membrane"/>
    <property type="evidence" value="ECO:0007669"/>
    <property type="project" value="UniProtKB-SubCell"/>
</dbReference>
<dbReference type="GO" id="GO:0009522">
    <property type="term" value="C:photosystem I"/>
    <property type="evidence" value="ECO:0007669"/>
    <property type="project" value="UniProtKB-KW"/>
</dbReference>
<dbReference type="GO" id="GO:0015979">
    <property type="term" value="P:photosynthesis"/>
    <property type="evidence" value="ECO:0007669"/>
    <property type="project" value="UniProtKB-UniRule"/>
</dbReference>
<dbReference type="FunFam" id="1.20.5.510:FF:000001">
    <property type="entry name" value="Photosystem I reaction center subunit IX"/>
    <property type="match status" value="1"/>
</dbReference>
<dbReference type="Gene3D" id="1.20.5.510">
    <property type="entry name" value="Single helix bin"/>
    <property type="match status" value="1"/>
</dbReference>
<dbReference type="HAMAP" id="MF_00522">
    <property type="entry name" value="PSI_PsaJ"/>
    <property type="match status" value="1"/>
</dbReference>
<dbReference type="InterPro" id="IPR002615">
    <property type="entry name" value="PSI_PsaJ"/>
</dbReference>
<dbReference type="InterPro" id="IPR036062">
    <property type="entry name" value="PSI_PsaJ_sf"/>
</dbReference>
<dbReference type="PANTHER" id="PTHR36082">
    <property type="match status" value="1"/>
</dbReference>
<dbReference type="PANTHER" id="PTHR36082:SF2">
    <property type="entry name" value="PHOTOSYSTEM I REACTION CENTER SUBUNIT IX"/>
    <property type="match status" value="1"/>
</dbReference>
<dbReference type="Pfam" id="PF01701">
    <property type="entry name" value="PSI_PsaJ"/>
    <property type="match status" value="1"/>
</dbReference>
<dbReference type="SUPFAM" id="SSF81544">
    <property type="entry name" value="Subunit IX of photosystem I reaction centre, PsaJ"/>
    <property type="match status" value="1"/>
</dbReference>
<sequence length="44" mass="5009">MRDLKTYLSVAPVLSTLWFGSLAGLLIEINRLFPDALTFPFFSF</sequence>